<dbReference type="EC" id="1.8.4.8" evidence="1"/>
<dbReference type="EMBL" id="CP001396">
    <property type="protein sequence ID" value="ACR61833.1"/>
    <property type="molecule type" value="Genomic_DNA"/>
</dbReference>
<dbReference type="RefSeq" id="WP_000039850.1">
    <property type="nucleotide sequence ID" value="NC_012759.1"/>
</dbReference>
<dbReference type="SMR" id="C4ZZR6"/>
<dbReference type="GeneID" id="75058622"/>
<dbReference type="KEGG" id="ebw:BWG_2498"/>
<dbReference type="HOGENOM" id="CLU_044089_3_0_6"/>
<dbReference type="UniPathway" id="UPA00140">
    <property type="reaction ID" value="UER00206"/>
</dbReference>
<dbReference type="GO" id="GO:0005737">
    <property type="term" value="C:cytoplasm"/>
    <property type="evidence" value="ECO:0007669"/>
    <property type="project" value="UniProtKB-SubCell"/>
</dbReference>
<dbReference type="GO" id="GO:0004604">
    <property type="term" value="F:phosphoadenylyl-sulfate reductase (thioredoxin) activity"/>
    <property type="evidence" value="ECO:0007669"/>
    <property type="project" value="UniProtKB-UniRule"/>
</dbReference>
<dbReference type="GO" id="GO:0070814">
    <property type="term" value="P:hydrogen sulfide biosynthetic process"/>
    <property type="evidence" value="ECO:0007669"/>
    <property type="project" value="UniProtKB-UniRule"/>
</dbReference>
<dbReference type="GO" id="GO:0019379">
    <property type="term" value="P:sulfate assimilation, phosphoadenylyl sulfate reduction by phosphoadenylyl-sulfate reductase (thioredoxin)"/>
    <property type="evidence" value="ECO:0007669"/>
    <property type="project" value="UniProtKB-UniRule"/>
</dbReference>
<dbReference type="CDD" id="cd23945">
    <property type="entry name" value="PAPS_reductase"/>
    <property type="match status" value="1"/>
</dbReference>
<dbReference type="FunFam" id="3.40.50.620:FF:000043">
    <property type="entry name" value="Phosphoadenosine phosphosulfate reductase"/>
    <property type="match status" value="1"/>
</dbReference>
<dbReference type="Gene3D" id="3.40.50.620">
    <property type="entry name" value="HUPs"/>
    <property type="match status" value="1"/>
</dbReference>
<dbReference type="HAMAP" id="MF_00063">
    <property type="entry name" value="CysH"/>
    <property type="match status" value="1"/>
</dbReference>
<dbReference type="InterPro" id="IPR004511">
    <property type="entry name" value="PAPS/APS_Rdtase"/>
</dbReference>
<dbReference type="InterPro" id="IPR002500">
    <property type="entry name" value="PAPS_reduct_dom"/>
</dbReference>
<dbReference type="InterPro" id="IPR011800">
    <property type="entry name" value="PAPS_reductase_CysH"/>
</dbReference>
<dbReference type="InterPro" id="IPR014729">
    <property type="entry name" value="Rossmann-like_a/b/a_fold"/>
</dbReference>
<dbReference type="NCBIfam" id="TIGR00434">
    <property type="entry name" value="cysH"/>
    <property type="match status" value="1"/>
</dbReference>
<dbReference type="NCBIfam" id="TIGR02057">
    <property type="entry name" value="PAPS_reductase"/>
    <property type="match status" value="1"/>
</dbReference>
<dbReference type="NCBIfam" id="NF002537">
    <property type="entry name" value="PRK02090.1"/>
    <property type="match status" value="1"/>
</dbReference>
<dbReference type="PANTHER" id="PTHR46509">
    <property type="entry name" value="PHOSPHOADENOSINE PHOSPHOSULFATE REDUCTASE"/>
    <property type="match status" value="1"/>
</dbReference>
<dbReference type="PANTHER" id="PTHR46509:SF1">
    <property type="entry name" value="PHOSPHOADENOSINE PHOSPHOSULFATE REDUCTASE"/>
    <property type="match status" value="1"/>
</dbReference>
<dbReference type="Pfam" id="PF01507">
    <property type="entry name" value="PAPS_reduct"/>
    <property type="match status" value="1"/>
</dbReference>
<dbReference type="PIRSF" id="PIRSF000857">
    <property type="entry name" value="PAPS_reductase"/>
    <property type="match status" value="1"/>
</dbReference>
<dbReference type="SUPFAM" id="SSF52402">
    <property type="entry name" value="Adenine nucleotide alpha hydrolases-like"/>
    <property type="match status" value="1"/>
</dbReference>
<sequence>MSKLDLNALNELPKVDRILALAETNAELEKLDAEGRVAWALDNLPGEYVLSSSFGIQAAVSLHLVNQIRPDIPVILTDTGYLFPETYRFIDELTDKLKLNLKVYRATESAAWQEARYGKLWEQGVEGIEKYNDINKVEPMNRALKELNAQTWFAGLRREQSGSRANLPVLAIQRGVFKVLPIIDWDNRTIYQYLQKHGLKYHPLWDEGYLSVGDTHTTRKWEPGMAEEETRFFGLKRECGLHEG</sequence>
<organism>
    <name type="scientific">Escherichia coli (strain K12 / MC4100 / BW2952)</name>
    <dbReference type="NCBI Taxonomy" id="595496"/>
    <lineage>
        <taxon>Bacteria</taxon>
        <taxon>Pseudomonadati</taxon>
        <taxon>Pseudomonadota</taxon>
        <taxon>Gammaproteobacteria</taxon>
        <taxon>Enterobacterales</taxon>
        <taxon>Enterobacteriaceae</taxon>
        <taxon>Escherichia</taxon>
    </lineage>
</organism>
<accession>C4ZZR6</accession>
<evidence type="ECO:0000255" key="1">
    <source>
        <dbReference type="HAMAP-Rule" id="MF_00063"/>
    </source>
</evidence>
<gene>
    <name evidence="1" type="primary">cysH</name>
    <name type="ordered locus">BWG_2498</name>
</gene>
<reference key="1">
    <citation type="journal article" date="2009" name="J. Bacteriol.">
        <title>Genomic sequencing reveals regulatory mutations and recombinational events in the widely used MC4100 lineage of Escherichia coli K-12.</title>
        <authorList>
            <person name="Ferenci T."/>
            <person name="Zhou Z."/>
            <person name="Betteridge T."/>
            <person name="Ren Y."/>
            <person name="Liu Y."/>
            <person name="Feng L."/>
            <person name="Reeves P.R."/>
            <person name="Wang L."/>
        </authorList>
    </citation>
    <scope>NUCLEOTIDE SEQUENCE [LARGE SCALE GENOMIC DNA]</scope>
    <source>
        <strain>K12 / MC4100 / BW2952</strain>
    </source>
</reference>
<feature type="chain" id="PRO_1000202395" description="Phosphoadenosine 5'-phosphosulfate reductase">
    <location>
        <begin position="1"/>
        <end position="244"/>
    </location>
</feature>
<feature type="active site" description="Nucleophile; cysteine thiosulfonate intermediate" evidence="1">
    <location>
        <position position="239"/>
    </location>
</feature>
<keyword id="KW-0963">Cytoplasm</keyword>
<keyword id="KW-0560">Oxidoreductase</keyword>
<comment type="function">
    <text evidence="1">Catalyzes the formation of sulfite from phosphoadenosine 5'-phosphosulfate (PAPS) using thioredoxin as an electron donor.</text>
</comment>
<comment type="catalytic activity">
    <reaction evidence="1">
        <text>[thioredoxin]-disulfide + sulfite + adenosine 3',5'-bisphosphate + 2 H(+) = [thioredoxin]-dithiol + 3'-phosphoadenylyl sulfate</text>
        <dbReference type="Rhea" id="RHEA:11724"/>
        <dbReference type="Rhea" id="RHEA-COMP:10698"/>
        <dbReference type="Rhea" id="RHEA-COMP:10700"/>
        <dbReference type="ChEBI" id="CHEBI:15378"/>
        <dbReference type="ChEBI" id="CHEBI:17359"/>
        <dbReference type="ChEBI" id="CHEBI:29950"/>
        <dbReference type="ChEBI" id="CHEBI:50058"/>
        <dbReference type="ChEBI" id="CHEBI:58339"/>
        <dbReference type="ChEBI" id="CHEBI:58343"/>
        <dbReference type="EC" id="1.8.4.8"/>
    </reaction>
</comment>
<comment type="pathway">
    <text evidence="1">Sulfur metabolism; hydrogen sulfide biosynthesis; sulfite from sulfate: step 3/3.</text>
</comment>
<comment type="subcellular location">
    <subcellularLocation>
        <location evidence="1">Cytoplasm</location>
    </subcellularLocation>
</comment>
<comment type="similarity">
    <text evidence="1">Belongs to the PAPS reductase family. CysH subfamily.</text>
</comment>
<name>CYSH_ECOBW</name>
<proteinExistence type="inferred from homology"/>
<protein>
    <recommendedName>
        <fullName evidence="1">Phosphoadenosine 5'-phosphosulfate reductase</fullName>
        <shortName evidence="1">PAPS reductase</shortName>
        <ecNumber evidence="1">1.8.4.8</ecNumber>
    </recommendedName>
    <alternativeName>
        <fullName evidence="1">3'-phosphoadenylylsulfate reductase</fullName>
    </alternativeName>
    <alternativeName>
        <fullName evidence="1">PAPS reductase, thioredoxin dependent</fullName>
    </alternativeName>
    <alternativeName>
        <fullName evidence="1">PAPS sulfotransferase</fullName>
    </alternativeName>
    <alternativeName>
        <fullName evidence="1">PAdoPS reductase</fullName>
    </alternativeName>
</protein>